<organism>
    <name type="scientific">Escherichia coli O157:H7</name>
    <dbReference type="NCBI Taxonomy" id="83334"/>
    <lineage>
        <taxon>Bacteria</taxon>
        <taxon>Pseudomonadati</taxon>
        <taxon>Pseudomonadota</taxon>
        <taxon>Gammaproteobacteria</taxon>
        <taxon>Enterobacterales</taxon>
        <taxon>Enterobacteriaceae</taxon>
        <taxon>Escherichia</taxon>
    </lineage>
</organism>
<name>QSEB_ECO57</name>
<comment type="function">
    <text evidence="3">Member of a two-component regulatory system QseB/QseC. Activates the flagella regulon by activating transcription of FlhDC. Currently it is not known whether this effect is direct or not.</text>
</comment>
<comment type="subcellular location">
    <subcellularLocation>
        <location evidence="4">Cytoplasm</location>
    </subcellularLocation>
</comment>
<comment type="induction">
    <text>By the AI-2 quorum sensing system.</text>
</comment>
<comment type="PTM">
    <text evidence="4">Phosphorylated by QseC.</text>
</comment>
<gene>
    <name type="primary">qseB</name>
    <name type="ordered locus">Z4377</name>
    <name type="ordered locus">ECs3907</name>
</gene>
<protein>
    <recommendedName>
        <fullName>Transcriptional regulatory protein QseB</fullName>
    </recommendedName>
</protein>
<proteinExistence type="evidence at transcript level"/>
<dbReference type="EMBL" id="AE005174">
    <property type="protein sequence ID" value="AAG58159.1"/>
    <property type="molecule type" value="Genomic_DNA"/>
</dbReference>
<dbReference type="EMBL" id="BA000007">
    <property type="protein sequence ID" value="BAB37330.1"/>
    <property type="molecule type" value="Genomic_DNA"/>
</dbReference>
<dbReference type="PIR" id="C85962">
    <property type="entry name" value="C85962"/>
</dbReference>
<dbReference type="PIR" id="C91117">
    <property type="entry name" value="C91117"/>
</dbReference>
<dbReference type="RefSeq" id="NP_311934.1">
    <property type="nucleotide sequence ID" value="NC_002695.1"/>
</dbReference>
<dbReference type="RefSeq" id="WP_001221502.1">
    <property type="nucleotide sequence ID" value="NZ_VOAI01000009.1"/>
</dbReference>
<dbReference type="SMR" id="Q8XBS3"/>
<dbReference type="STRING" id="155864.Z4377"/>
<dbReference type="GeneID" id="75203581"/>
<dbReference type="GeneID" id="916262"/>
<dbReference type="KEGG" id="ece:Z4377"/>
<dbReference type="KEGG" id="ecs:ECs_3907"/>
<dbReference type="PATRIC" id="fig|386585.9.peg.4075"/>
<dbReference type="eggNOG" id="COG0745">
    <property type="taxonomic scope" value="Bacteria"/>
</dbReference>
<dbReference type="HOGENOM" id="CLU_000445_30_1_6"/>
<dbReference type="OMA" id="VWGWDFG"/>
<dbReference type="Proteomes" id="UP000000558">
    <property type="component" value="Chromosome"/>
</dbReference>
<dbReference type="Proteomes" id="UP000002519">
    <property type="component" value="Chromosome"/>
</dbReference>
<dbReference type="GO" id="GO:0005829">
    <property type="term" value="C:cytosol"/>
    <property type="evidence" value="ECO:0007669"/>
    <property type="project" value="TreeGrafter"/>
</dbReference>
<dbReference type="GO" id="GO:0032993">
    <property type="term" value="C:protein-DNA complex"/>
    <property type="evidence" value="ECO:0007669"/>
    <property type="project" value="TreeGrafter"/>
</dbReference>
<dbReference type="GO" id="GO:0000156">
    <property type="term" value="F:phosphorelay response regulator activity"/>
    <property type="evidence" value="ECO:0007669"/>
    <property type="project" value="TreeGrafter"/>
</dbReference>
<dbReference type="GO" id="GO:0000976">
    <property type="term" value="F:transcription cis-regulatory region binding"/>
    <property type="evidence" value="ECO:0007669"/>
    <property type="project" value="TreeGrafter"/>
</dbReference>
<dbReference type="GO" id="GO:0006355">
    <property type="term" value="P:regulation of DNA-templated transcription"/>
    <property type="evidence" value="ECO:0007669"/>
    <property type="project" value="InterPro"/>
</dbReference>
<dbReference type="CDD" id="cd17624">
    <property type="entry name" value="REC_OmpR_PmrA-like"/>
    <property type="match status" value="1"/>
</dbReference>
<dbReference type="CDD" id="cd00383">
    <property type="entry name" value="trans_reg_C"/>
    <property type="match status" value="1"/>
</dbReference>
<dbReference type="FunFam" id="3.40.50.2300:FF:000002">
    <property type="entry name" value="DNA-binding response regulator PhoP"/>
    <property type="match status" value="1"/>
</dbReference>
<dbReference type="FunFam" id="1.10.10.10:FF:000005">
    <property type="entry name" value="Two-component system response regulator"/>
    <property type="match status" value="1"/>
</dbReference>
<dbReference type="Gene3D" id="3.40.50.2300">
    <property type="match status" value="1"/>
</dbReference>
<dbReference type="Gene3D" id="6.10.250.690">
    <property type="match status" value="1"/>
</dbReference>
<dbReference type="Gene3D" id="1.10.10.10">
    <property type="entry name" value="Winged helix-like DNA-binding domain superfamily/Winged helix DNA-binding domain"/>
    <property type="match status" value="1"/>
</dbReference>
<dbReference type="InterPro" id="IPR011006">
    <property type="entry name" value="CheY-like_superfamily"/>
</dbReference>
<dbReference type="InterPro" id="IPR001867">
    <property type="entry name" value="OmpR/PhoB-type_DNA-bd"/>
</dbReference>
<dbReference type="InterPro" id="IPR001789">
    <property type="entry name" value="Sig_transdc_resp-reg_receiver"/>
</dbReference>
<dbReference type="InterPro" id="IPR039420">
    <property type="entry name" value="WalR-like"/>
</dbReference>
<dbReference type="InterPro" id="IPR036388">
    <property type="entry name" value="WH-like_DNA-bd_sf"/>
</dbReference>
<dbReference type="NCBIfam" id="NF007663">
    <property type="entry name" value="PRK10336.1"/>
    <property type="match status" value="1"/>
</dbReference>
<dbReference type="PANTHER" id="PTHR48111">
    <property type="entry name" value="REGULATOR OF RPOS"/>
    <property type="match status" value="1"/>
</dbReference>
<dbReference type="PANTHER" id="PTHR48111:SF35">
    <property type="entry name" value="TRANSCRIPTIONAL REGULATORY PROTEIN QSEB"/>
    <property type="match status" value="1"/>
</dbReference>
<dbReference type="Pfam" id="PF00072">
    <property type="entry name" value="Response_reg"/>
    <property type="match status" value="1"/>
</dbReference>
<dbReference type="Pfam" id="PF00486">
    <property type="entry name" value="Trans_reg_C"/>
    <property type="match status" value="1"/>
</dbReference>
<dbReference type="SMART" id="SM00448">
    <property type="entry name" value="REC"/>
    <property type="match status" value="1"/>
</dbReference>
<dbReference type="SMART" id="SM00862">
    <property type="entry name" value="Trans_reg_C"/>
    <property type="match status" value="1"/>
</dbReference>
<dbReference type="SUPFAM" id="SSF52172">
    <property type="entry name" value="CheY-like"/>
    <property type="match status" value="1"/>
</dbReference>
<dbReference type="PROSITE" id="PS51755">
    <property type="entry name" value="OMPR_PHOB"/>
    <property type="match status" value="1"/>
</dbReference>
<dbReference type="PROSITE" id="PS50110">
    <property type="entry name" value="RESPONSE_REGULATORY"/>
    <property type="match status" value="1"/>
</dbReference>
<feature type="chain" id="PRO_0000081026" description="Transcriptional regulatory protein QseB">
    <location>
        <begin position="1"/>
        <end position="219"/>
    </location>
</feature>
<feature type="domain" description="Response regulatory" evidence="1">
    <location>
        <begin position="2"/>
        <end position="116"/>
    </location>
</feature>
<feature type="DNA-binding region" description="OmpR/PhoB-type" evidence="2">
    <location>
        <begin position="124"/>
        <end position="218"/>
    </location>
</feature>
<feature type="modified residue" description="4-aspartylphosphate" evidence="1">
    <location>
        <position position="51"/>
    </location>
</feature>
<reference key="1">
    <citation type="journal article" date="2001" name="Nature">
        <title>Genome sequence of enterohaemorrhagic Escherichia coli O157:H7.</title>
        <authorList>
            <person name="Perna N.T."/>
            <person name="Plunkett G. III"/>
            <person name="Burland V."/>
            <person name="Mau B."/>
            <person name="Glasner J.D."/>
            <person name="Rose D.J."/>
            <person name="Mayhew G.F."/>
            <person name="Evans P.S."/>
            <person name="Gregor J."/>
            <person name="Kirkpatrick H.A."/>
            <person name="Posfai G."/>
            <person name="Hackett J."/>
            <person name="Klink S."/>
            <person name="Boutin A."/>
            <person name="Shao Y."/>
            <person name="Miller L."/>
            <person name="Grotbeck E.J."/>
            <person name="Davis N.W."/>
            <person name="Lim A."/>
            <person name="Dimalanta E.T."/>
            <person name="Potamousis K."/>
            <person name="Apodaca J."/>
            <person name="Anantharaman T.S."/>
            <person name="Lin J."/>
            <person name="Yen G."/>
            <person name="Schwartz D.C."/>
            <person name="Welch R.A."/>
            <person name="Blattner F.R."/>
        </authorList>
    </citation>
    <scope>NUCLEOTIDE SEQUENCE [LARGE SCALE GENOMIC DNA]</scope>
    <source>
        <strain>O157:H7 / EDL933 / ATCC 700927 / EHEC</strain>
    </source>
</reference>
<reference key="2">
    <citation type="journal article" date="2001" name="DNA Res.">
        <title>Complete genome sequence of enterohemorrhagic Escherichia coli O157:H7 and genomic comparison with a laboratory strain K-12.</title>
        <authorList>
            <person name="Hayashi T."/>
            <person name="Makino K."/>
            <person name="Ohnishi M."/>
            <person name="Kurokawa K."/>
            <person name="Ishii K."/>
            <person name="Yokoyama K."/>
            <person name="Han C.-G."/>
            <person name="Ohtsubo E."/>
            <person name="Nakayama K."/>
            <person name="Murata T."/>
            <person name="Tanaka M."/>
            <person name="Tobe T."/>
            <person name="Iida T."/>
            <person name="Takami H."/>
            <person name="Honda T."/>
            <person name="Sasakawa C."/>
            <person name="Ogasawara N."/>
            <person name="Yasunaga T."/>
            <person name="Kuhara S."/>
            <person name="Shiba T."/>
            <person name="Hattori M."/>
            <person name="Shinagawa H."/>
        </authorList>
    </citation>
    <scope>NUCLEOTIDE SEQUENCE [LARGE SCALE GENOMIC DNA]</scope>
    <source>
        <strain>O157:H7 / Sakai / RIMD 0509952 / EHEC</strain>
    </source>
</reference>
<reference key="3">
    <citation type="journal article" date="2002" name="Mol. Microbiol.">
        <title>Quorum sensing Escherichia coli regulators B and C (QseBC): a novel two-component regulatory system involved in the regulation of flagella and motility by quorum sensing in E. coli.</title>
        <authorList>
            <person name="Sperandio V."/>
            <person name="Torres A.G."/>
            <person name="Kaper J.B."/>
        </authorList>
    </citation>
    <scope>FUNCTION</scope>
    <source>
        <strain>K12</strain>
        <strain>O157:H7 / EHEC</strain>
    </source>
</reference>
<accession>Q8XBS3</accession>
<evidence type="ECO:0000255" key="1">
    <source>
        <dbReference type="PROSITE-ProRule" id="PRU00169"/>
    </source>
</evidence>
<evidence type="ECO:0000255" key="2">
    <source>
        <dbReference type="PROSITE-ProRule" id="PRU01091"/>
    </source>
</evidence>
<evidence type="ECO:0000269" key="3">
    <source>
    </source>
</evidence>
<evidence type="ECO:0000305" key="4"/>
<sequence>MRILLIEDDMLIGDGIKTGLSKMGFSVDWFTQGRQGKEALYSAPYDAVILDLTLPGMDGRDILREWREKGQREPVLILTARDALEERVEGLRLGADDYLCKPFALIEVAARLEALMRRTNGQASNELRHGNVMLDPGKRIATLAGEPLTLKPKEFALLELLMRNAGRVLPRKLIEEKLYTWDEEVTSNAVEVHVHHLRRKLGSDFIRTVHGIGYTLGEK</sequence>
<keyword id="KW-0010">Activator</keyword>
<keyword id="KW-0963">Cytoplasm</keyword>
<keyword id="KW-0238">DNA-binding</keyword>
<keyword id="KW-0597">Phosphoprotein</keyword>
<keyword id="KW-1185">Reference proteome</keyword>
<keyword id="KW-0804">Transcription</keyword>
<keyword id="KW-0805">Transcription regulation</keyword>
<keyword id="KW-0902">Two-component regulatory system</keyword>